<gene>
    <name evidence="1" type="primary">uxuA</name>
    <name type="ordered locus">BSUIS_B0806</name>
</gene>
<dbReference type="EC" id="4.2.1.8" evidence="1"/>
<dbReference type="EMBL" id="CP000912">
    <property type="protein sequence ID" value="ABY39769.1"/>
    <property type="molecule type" value="Genomic_DNA"/>
</dbReference>
<dbReference type="RefSeq" id="WP_004690313.1">
    <property type="nucleotide sequence ID" value="NC_010167.1"/>
</dbReference>
<dbReference type="SMR" id="A9WZA3"/>
<dbReference type="GeneID" id="97535099"/>
<dbReference type="KEGG" id="bmt:BSUIS_B0806"/>
<dbReference type="HOGENOM" id="CLU_058621_2_0_5"/>
<dbReference type="UniPathway" id="UPA00246"/>
<dbReference type="Proteomes" id="UP000008545">
    <property type="component" value="Chromosome II"/>
</dbReference>
<dbReference type="GO" id="GO:0008198">
    <property type="term" value="F:ferrous iron binding"/>
    <property type="evidence" value="ECO:0007669"/>
    <property type="project" value="TreeGrafter"/>
</dbReference>
<dbReference type="GO" id="GO:0030145">
    <property type="term" value="F:manganese ion binding"/>
    <property type="evidence" value="ECO:0007669"/>
    <property type="project" value="TreeGrafter"/>
</dbReference>
<dbReference type="GO" id="GO:0008927">
    <property type="term" value="F:mannonate dehydratase activity"/>
    <property type="evidence" value="ECO:0007669"/>
    <property type="project" value="UniProtKB-UniRule"/>
</dbReference>
<dbReference type="GO" id="GO:0042840">
    <property type="term" value="P:D-glucuronate catabolic process"/>
    <property type="evidence" value="ECO:0007669"/>
    <property type="project" value="TreeGrafter"/>
</dbReference>
<dbReference type="Gene3D" id="3.20.20.150">
    <property type="entry name" value="Divalent-metal-dependent TIM barrel enzymes"/>
    <property type="match status" value="1"/>
</dbReference>
<dbReference type="HAMAP" id="MF_00106">
    <property type="entry name" value="UxuA"/>
    <property type="match status" value="1"/>
</dbReference>
<dbReference type="InterPro" id="IPR004628">
    <property type="entry name" value="Man_deHydtase"/>
</dbReference>
<dbReference type="InterPro" id="IPR036237">
    <property type="entry name" value="Xyl_isomerase-like_sf"/>
</dbReference>
<dbReference type="NCBIfam" id="NF003027">
    <property type="entry name" value="PRK03906.1"/>
    <property type="match status" value="1"/>
</dbReference>
<dbReference type="NCBIfam" id="TIGR00695">
    <property type="entry name" value="uxuA"/>
    <property type="match status" value="1"/>
</dbReference>
<dbReference type="PANTHER" id="PTHR30387">
    <property type="entry name" value="MANNONATE DEHYDRATASE"/>
    <property type="match status" value="1"/>
</dbReference>
<dbReference type="PANTHER" id="PTHR30387:SF2">
    <property type="entry name" value="MANNONATE DEHYDRATASE"/>
    <property type="match status" value="1"/>
</dbReference>
<dbReference type="Pfam" id="PF03786">
    <property type="entry name" value="UxuA"/>
    <property type="match status" value="1"/>
</dbReference>
<dbReference type="PIRSF" id="PIRSF016049">
    <property type="entry name" value="Man_dehyd"/>
    <property type="match status" value="1"/>
</dbReference>
<dbReference type="SUPFAM" id="SSF51658">
    <property type="entry name" value="Xylose isomerase-like"/>
    <property type="match status" value="1"/>
</dbReference>
<organism>
    <name type="scientific">Brucella suis (strain ATCC 23445 / NCTC 10510)</name>
    <dbReference type="NCBI Taxonomy" id="470137"/>
    <lineage>
        <taxon>Bacteria</taxon>
        <taxon>Pseudomonadati</taxon>
        <taxon>Pseudomonadota</taxon>
        <taxon>Alphaproteobacteria</taxon>
        <taxon>Hyphomicrobiales</taxon>
        <taxon>Brucellaceae</taxon>
        <taxon>Brucella/Ochrobactrum group</taxon>
        <taxon>Brucella</taxon>
    </lineage>
</organism>
<comment type="function">
    <text evidence="1">Catalyzes the dehydration of D-mannonate.</text>
</comment>
<comment type="catalytic activity">
    <reaction evidence="1">
        <text>D-mannonate = 2-dehydro-3-deoxy-D-gluconate + H2O</text>
        <dbReference type="Rhea" id="RHEA:20097"/>
        <dbReference type="ChEBI" id="CHEBI:15377"/>
        <dbReference type="ChEBI" id="CHEBI:17767"/>
        <dbReference type="ChEBI" id="CHEBI:57990"/>
        <dbReference type="EC" id="4.2.1.8"/>
    </reaction>
</comment>
<comment type="cofactor">
    <cofactor evidence="1">
        <name>Fe(2+)</name>
        <dbReference type="ChEBI" id="CHEBI:29033"/>
    </cofactor>
    <cofactor evidence="1">
        <name>Mn(2+)</name>
        <dbReference type="ChEBI" id="CHEBI:29035"/>
    </cofactor>
</comment>
<comment type="pathway">
    <text evidence="1">Carbohydrate metabolism; pentose and glucuronate interconversion.</text>
</comment>
<comment type="similarity">
    <text evidence="1">Belongs to the mannonate dehydratase family.</text>
</comment>
<name>UXUA_BRUSI</name>
<proteinExistence type="inferred from homology"/>
<evidence type="ECO:0000255" key="1">
    <source>
        <dbReference type="HAMAP-Rule" id="MF_00106"/>
    </source>
</evidence>
<keyword id="KW-0408">Iron</keyword>
<keyword id="KW-0456">Lyase</keyword>
<keyword id="KW-0464">Manganese</keyword>
<sequence>MRQAWRWFGPEAGVPLDAVRQAGATDIVSALHEVPIGQEWTSAQIVERKNLIESTPTGRHPLTWSVVESIPVSDDIKRSGKAARHDIGAWIASMEALARNDIKVICYNFMPVVDWCRTDLDYITSTGATAMRFDQDRFAAFDLHILQRKGAEKDYSEEDRIAARAIFEAMDETEIEQLIVNIASALPGSTTEPLTIPAFREKLETYASIDAAHLRRNLVEFLEAVTPVADSLGVKLTLHPDDPPRSLFGLPRIASTEADYAAIFAAVPAQSNGMCFCTGSLGVRADNDLPAIARRFASRIHFSHLRATTREGDGRTFHEAAHLEGDVDMVGILRILLEEDRKRDAGQTIIFRSDHGHRMMDDLEKKVTPGYPVIGRMRGLAELRGIITALDACALEYDPNV</sequence>
<feature type="chain" id="PRO_1000075897" description="Mannonate dehydratase">
    <location>
        <begin position="1"/>
        <end position="401"/>
    </location>
</feature>
<protein>
    <recommendedName>
        <fullName evidence="1">Mannonate dehydratase</fullName>
        <ecNumber evidence="1">4.2.1.8</ecNumber>
    </recommendedName>
    <alternativeName>
        <fullName evidence="1">D-mannonate hydro-lyase</fullName>
    </alternativeName>
</protein>
<accession>A9WZA3</accession>
<reference key="1">
    <citation type="submission" date="2007-12" db="EMBL/GenBank/DDBJ databases">
        <title>Brucella suis ATCC 23445 whole genome shotgun sequencing project.</title>
        <authorList>
            <person name="Setubal J.C."/>
            <person name="Bowns C."/>
            <person name="Boyle S."/>
            <person name="Crasta O.R."/>
            <person name="Czar M.J."/>
            <person name="Dharmanolla C."/>
            <person name="Gillespie J.J."/>
            <person name="Kenyon R.W."/>
            <person name="Lu J."/>
            <person name="Mane S."/>
            <person name="Mohapatra S."/>
            <person name="Nagrani S."/>
            <person name="Purkayastha A."/>
            <person name="Rajasimha H.K."/>
            <person name="Shallom J.M."/>
            <person name="Shallom S."/>
            <person name="Shukla M."/>
            <person name="Snyder E.E."/>
            <person name="Sobral B.W."/>
            <person name="Wattam A.R."/>
            <person name="Will R."/>
            <person name="Williams K."/>
            <person name="Yoo H."/>
            <person name="Bruce D."/>
            <person name="Detter C."/>
            <person name="Munk C."/>
            <person name="Brettin T.S."/>
        </authorList>
    </citation>
    <scope>NUCLEOTIDE SEQUENCE [LARGE SCALE GENOMIC DNA]</scope>
    <source>
        <strain>ATCC 23445 / NCTC 10510</strain>
    </source>
</reference>